<name>MMPL8_MYCBO</name>
<dbReference type="EMBL" id="LT708304">
    <property type="protein sequence ID" value="SIU02482.1"/>
    <property type="molecule type" value="Genomic_DNA"/>
</dbReference>
<dbReference type="RefSeq" id="NP_857490.1">
    <property type="nucleotide sequence ID" value="NC_002945.3"/>
</dbReference>
<dbReference type="RefSeq" id="WP_003908351.1">
    <property type="nucleotide sequence ID" value="NC_002945.4"/>
</dbReference>
<dbReference type="SMR" id="Q7TVL0"/>
<dbReference type="KEGG" id="mbo:BQ2027_MB3853C"/>
<dbReference type="PATRIC" id="fig|233413.5.peg.4214"/>
<dbReference type="Proteomes" id="UP000001419">
    <property type="component" value="Chromosome"/>
</dbReference>
<dbReference type="GO" id="GO:0005886">
    <property type="term" value="C:plasma membrane"/>
    <property type="evidence" value="ECO:0007669"/>
    <property type="project" value="UniProtKB-SubCell"/>
</dbReference>
<dbReference type="FunFam" id="1.20.1640.10:FF:000018">
    <property type="entry name" value="Transmembrane transport protein MmpL10"/>
    <property type="match status" value="1"/>
</dbReference>
<dbReference type="FunFam" id="1.20.1640.10:FF:000020">
    <property type="entry name" value="Transmembrane transport protein MmpL10"/>
    <property type="match status" value="1"/>
</dbReference>
<dbReference type="Gene3D" id="1.20.1640.10">
    <property type="entry name" value="Multidrug efflux transporter AcrB transmembrane domain"/>
    <property type="match status" value="2"/>
</dbReference>
<dbReference type="InterPro" id="IPR004869">
    <property type="entry name" value="MMPL_dom"/>
</dbReference>
<dbReference type="InterPro" id="IPR004707">
    <property type="entry name" value="MmpL_fam"/>
</dbReference>
<dbReference type="InterPro" id="IPR050545">
    <property type="entry name" value="Mycobact_MmpL"/>
</dbReference>
<dbReference type="InterPro" id="IPR000731">
    <property type="entry name" value="SSD"/>
</dbReference>
<dbReference type="NCBIfam" id="TIGR00833">
    <property type="entry name" value="actII"/>
    <property type="match status" value="1"/>
</dbReference>
<dbReference type="PANTHER" id="PTHR33406">
    <property type="entry name" value="MEMBRANE PROTEIN MJ1562-RELATED"/>
    <property type="match status" value="1"/>
</dbReference>
<dbReference type="PANTHER" id="PTHR33406:SF6">
    <property type="entry name" value="MEMBRANE PROTEIN YDGH-RELATED"/>
    <property type="match status" value="1"/>
</dbReference>
<dbReference type="Pfam" id="PF03176">
    <property type="entry name" value="MMPL"/>
    <property type="match status" value="2"/>
</dbReference>
<dbReference type="SUPFAM" id="SSF82866">
    <property type="entry name" value="Multidrug efflux transporter AcrB transmembrane domain"/>
    <property type="match status" value="2"/>
</dbReference>
<dbReference type="PROSITE" id="PS50156">
    <property type="entry name" value="SSD"/>
    <property type="match status" value="1"/>
</dbReference>
<keyword id="KW-1003">Cell membrane</keyword>
<keyword id="KW-0472">Membrane</keyword>
<keyword id="KW-1185">Reference proteome</keyword>
<keyword id="KW-0812">Transmembrane</keyword>
<keyword id="KW-1133">Transmembrane helix</keyword>
<organism>
    <name type="scientific">Mycobacterium bovis (strain ATCC BAA-935 / AF2122/97)</name>
    <dbReference type="NCBI Taxonomy" id="233413"/>
    <lineage>
        <taxon>Bacteria</taxon>
        <taxon>Bacillati</taxon>
        <taxon>Actinomycetota</taxon>
        <taxon>Actinomycetes</taxon>
        <taxon>Mycobacteriales</taxon>
        <taxon>Mycobacteriaceae</taxon>
        <taxon>Mycobacterium</taxon>
        <taxon>Mycobacterium tuberculosis complex</taxon>
    </lineage>
</organism>
<gene>
    <name type="primary">mmpL8</name>
    <name type="ordered locus">BQ2027_MB3853C</name>
</gene>
<feature type="chain" id="PRO_0000314682" description="Probable transport protein MmpL8">
    <location>
        <begin position="1"/>
        <end position="1089"/>
    </location>
</feature>
<feature type="transmembrane region" description="Helical" evidence="1">
    <location>
        <begin position="44"/>
        <end position="64"/>
    </location>
</feature>
<feature type="transmembrane region" description="Helical" evidence="1">
    <location>
        <begin position="222"/>
        <end position="242"/>
    </location>
</feature>
<feature type="transmembrane region" description="Helical" evidence="1">
    <location>
        <begin position="257"/>
        <end position="277"/>
    </location>
</feature>
<feature type="transmembrane region" description="Helical" evidence="1">
    <location>
        <begin position="316"/>
        <end position="336"/>
    </location>
</feature>
<feature type="transmembrane region" description="Helical" evidence="1">
    <location>
        <begin position="349"/>
        <end position="369"/>
    </location>
</feature>
<feature type="transmembrane region" description="Helical" evidence="1">
    <location>
        <begin position="400"/>
        <end position="420"/>
    </location>
</feature>
<feature type="transmembrane region" description="Helical" evidence="1">
    <location>
        <begin position="555"/>
        <end position="575"/>
    </location>
</feature>
<feature type="transmembrane region" description="Helical" evidence="1">
    <location>
        <begin position="874"/>
        <end position="894"/>
    </location>
</feature>
<feature type="transmembrane region" description="Helical" evidence="1">
    <location>
        <begin position="898"/>
        <end position="918"/>
    </location>
</feature>
<feature type="transmembrane region" description="Helical" evidence="1">
    <location>
        <begin position="930"/>
        <end position="950"/>
    </location>
</feature>
<feature type="transmembrane region" description="Helical" evidence="1">
    <location>
        <begin position="973"/>
        <end position="993"/>
    </location>
</feature>
<feature type="transmembrane region" description="Helical" evidence="1">
    <location>
        <begin position="996"/>
        <end position="1016"/>
    </location>
</feature>
<feature type="region of interest" description="Disordered" evidence="2">
    <location>
        <begin position="1"/>
        <end position="26"/>
    </location>
</feature>
<feature type="region of interest" description="Disordered" evidence="2">
    <location>
        <begin position="1056"/>
        <end position="1078"/>
    </location>
</feature>
<feature type="compositionally biased region" description="Acidic residues" evidence="2">
    <location>
        <begin position="1066"/>
        <end position="1078"/>
    </location>
</feature>
<accession>Q7TVL0</accession>
<accession>A0A1R3Y5C5</accession>
<accession>X2BPW7</accession>
<protein>
    <recommendedName>
        <fullName evidence="3">Probable transport protein MmpL8</fullName>
    </recommendedName>
</protein>
<comment type="subcellular location">
    <subcellularLocation>
        <location evidence="3">Cell membrane</location>
        <topology evidence="3">Multi-pass membrane protein</topology>
    </subcellularLocation>
</comment>
<comment type="similarity">
    <text evidence="3">Belongs to the resistance-nodulation-cell division (RND) (TC 2.A.6) family. MmpL subfamily.</text>
</comment>
<reference key="1">
    <citation type="journal article" date="2003" name="Proc. Natl. Acad. Sci. U.S.A.">
        <title>The complete genome sequence of Mycobacterium bovis.</title>
        <authorList>
            <person name="Garnier T."/>
            <person name="Eiglmeier K."/>
            <person name="Camus J.-C."/>
            <person name="Medina N."/>
            <person name="Mansoor H."/>
            <person name="Pryor M."/>
            <person name="Duthoy S."/>
            <person name="Grondin S."/>
            <person name="Lacroix C."/>
            <person name="Monsempe C."/>
            <person name="Simon S."/>
            <person name="Harris B."/>
            <person name="Atkin R."/>
            <person name="Doggett J."/>
            <person name="Mayes R."/>
            <person name="Keating L."/>
            <person name="Wheeler P.R."/>
            <person name="Parkhill J."/>
            <person name="Barrell B.G."/>
            <person name="Cole S.T."/>
            <person name="Gordon S.V."/>
            <person name="Hewinson R.G."/>
        </authorList>
    </citation>
    <scope>NUCLEOTIDE SEQUENCE [LARGE SCALE GENOMIC DNA]</scope>
    <source>
        <strain>ATCC BAA-935 / AF2122/97</strain>
    </source>
</reference>
<reference key="2">
    <citation type="journal article" date="2017" name="Genome Announc.">
        <title>Updated reference genome sequence and annotation of Mycobacterium bovis AF2122/97.</title>
        <authorList>
            <person name="Malone K.M."/>
            <person name="Farrell D."/>
            <person name="Stuber T.P."/>
            <person name="Schubert O.T."/>
            <person name="Aebersold R."/>
            <person name="Robbe-Austerman S."/>
            <person name="Gordon S.V."/>
        </authorList>
    </citation>
    <scope>NUCLEOTIDE SEQUENCE [LARGE SCALE GENOMIC DNA]</scope>
    <scope>GENOME REANNOTATION</scope>
    <source>
        <strain>ATCC BAA-935 / AF2122/97</strain>
    </source>
</reference>
<proteinExistence type="inferred from homology"/>
<sequence length="1089" mass="116069">MCDVLMQPVRTPRPSTNLRSKPLRPTGDGGVFPRLGRLIVRRPWVVIAFWVALAGLLAPTVPSLDAISQRHPVAILPSDAPVLVSTRQMTAAFREAGLQSVAVVVLSDAKGLGAADERSYKELVDALRRDTRDVVMLQDFVTTPPLRELMTSKDNQAWILPVGLPGDLGSTQSKQAYARVADIVEHQVAGSTLTANLTGPAATVADLNLTGQRDRSRIEFAITILLLVILLIIYRNPITMVLPLITIGMSVVVAQRLVAIAGLAGLGIANQSIIFMSGMMVGAGTDYAVFLISRYHDYLRQGADSDQAVKKALTSIGKVIAASAATVAITFLGMVFTQLGILKTVGPMLGISVAVVFFAAVTLLPALMVLTGRRGWIAPRRDLTRRFWRSSGVHIVRRPKTHLLASALVLVILAGCAGLARYNYDDRKTLPASVESSIGYAALDKHFPSNLIIPEYLFIQSSTDLRTPKALADLEQMVQRVSQVPGVAMVRGITRPAGRSLEQARTSWQAGEVGSKLDEGSKQIAAHTGDIDKLAGGANLMASKLGDVRAQVNRAISTVGGLIDALAYLQDLLGGNRVLGELEGAEKLIGSMRALGDTIDADASFVANNTEWASPVLGALDSSPMCTADPACASARTELQRLVTARDDGTLAKISELARQLQATRAVQTLAATVSGLRGALATVIRAMGSLGMSSPGGVRSKINLVNKGVNDLADGSRQLAEGVQLLVDQVKKMGFGLGEASAFLLAMKDTATTPAMAGFYIPPELLSYATGESVKAETMPSEYRDLLGGLNVDQLKKVAAAFISPDGHSIRYLIQTDLNPFSTAAMDQIDAITAAARGAQPNTALADAKVSVVGLPVVLKDTRDYSDHDLRLIIAMTVCIVLLILIVLLRAIVAPLYLIGSVIVSYLAALGIGVIVFQFLLGQEMHWSIPGLTFVILVAVGADYNMLLISRLREEAVLGVRSGVIRTVASTGGVITAAGLIMAASMYGLVFASLGSVVQGAFVLGTGLLLDTFLVRTVTVPAIAVLVGQANWWLPSSWRPATWWPLGRRRGRAQRTKRKPLLPKEEEEQSPPDDDDLIGLWLHDGLRL</sequence>
<evidence type="ECO:0000255" key="1"/>
<evidence type="ECO:0000256" key="2">
    <source>
        <dbReference type="SAM" id="MobiDB-lite"/>
    </source>
</evidence>
<evidence type="ECO:0000305" key="3"/>